<comment type="function">
    <text evidence="3 4">Catalyzes the interconversion of 2-phosphoglycerate and 3-phosphoglycerate.</text>
</comment>
<comment type="catalytic activity">
    <reaction evidence="3 4">
        <text>(2R)-2-phosphoglycerate = (2R)-3-phosphoglycerate</text>
        <dbReference type="Rhea" id="RHEA:15901"/>
        <dbReference type="ChEBI" id="CHEBI:58272"/>
        <dbReference type="ChEBI" id="CHEBI:58289"/>
        <dbReference type="EC" id="5.4.2.12"/>
    </reaction>
</comment>
<comment type="cofactor">
    <cofactor evidence="4">
        <name>Mg(2+)</name>
        <dbReference type="ChEBI" id="CHEBI:18420"/>
    </cofactor>
    <cofactor evidence="4">
        <name>Mn(2+)</name>
        <dbReference type="ChEBI" id="CHEBI:29035"/>
    </cofactor>
    <text evidence="2 4">Binds 2 manganese or magnesium ions per subunit (By similarity). Cobalt and nickel are less efficient (PubMed:17897734).</text>
</comment>
<comment type="activity regulation">
    <text evidence="3">Activity is not affected by 2,3-bisphosphoglycerate.</text>
</comment>
<comment type="biophysicochemical properties">
    <kinetics>
        <KM evidence="4">0.353 mM for 3-phosphoglycerate</KM>
    </kinetics>
    <phDependence>
        <text evidence="4">Optimum pH is 7.5-8.5.</text>
    </phDependence>
    <temperatureDependence>
        <text evidence="4">Optimum temperature is 32 degrees Celsius. Active between 17 and 32 degrees Celsius.</text>
    </temperatureDependence>
</comment>
<comment type="pathway">
    <text evidence="8">Carbohydrate degradation; glycolysis; pyruvate from D-glyceraldehyde 3-phosphate: step 3/5.</text>
</comment>
<comment type="similarity">
    <text evidence="7">Belongs to the BPG-independent phosphoglycerate mutase family.</text>
</comment>
<gene>
    <name evidence="1" type="primary">ipgm-1</name>
</gene>
<keyword id="KW-0324">Glycolysis</keyword>
<keyword id="KW-0413">Isomerase</keyword>
<keyword id="KW-0460">Magnesium</keyword>
<keyword id="KW-0464">Manganese</keyword>
<keyword id="KW-0479">Metal-binding</keyword>
<keyword id="KW-1185">Reference proteome</keyword>
<name>GPMI_BRUMA</name>
<evidence type="ECO:0000250" key="1">
    <source>
        <dbReference type="UniProtKB" id="G5EFZ1"/>
    </source>
</evidence>
<evidence type="ECO:0000250" key="2">
    <source>
        <dbReference type="UniProtKB" id="Q9X519"/>
    </source>
</evidence>
<evidence type="ECO:0000269" key="3">
    <source>
    </source>
</evidence>
<evidence type="ECO:0000269" key="4">
    <source>
    </source>
</evidence>
<evidence type="ECO:0000303" key="5">
    <source>
    </source>
</evidence>
<evidence type="ECO:0000303" key="6">
    <source>
    </source>
</evidence>
<evidence type="ECO:0000305" key="7"/>
<evidence type="ECO:0000305" key="8">
    <source>
    </source>
</evidence>
<evidence type="ECO:0000312" key="9">
    <source>
        <dbReference type="EMBL" id="AAQ97626.1"/>
    </source>
</evidence>
<organism evidence="9">
    <name type="scientific">Brugia malayi</name>
    <name type="common">Filarial nematode worm</name>
    <dbReference type="NCBI Taxonomy" id="6279"/>
    <lineage>
        <taxon>Eukaryota</taxon>
        <taxon>Metazoa</taxon>
        <taxon>Ecdysozoa</taxon>
        <taxon>Nematoda</taxon>
        <taxon>Chromadorea</taxon>
        <taxon>Rhabditida</taxon>
        <taxon>Spirurina</taxon>
        <taxon>Spiruromorpha</taxon>
        <taxon>Filarioidea</taxon>
        <taxon>Onchocercidae</taxon>
        <taxon>Brugia</taxon>
    </lineage>
</organism>
<sequence>MAEAKNRVCLVVIDGWGISNETKGNAILNAKTPVMDELCVMNSHPIQAHGLHVGLPEGLMGNSEVGHLNIGAGRVVYQDIVRINLAVKNKTLVENKHLKEAAERAIKGNGRMHLCGLVSDGGVHSHIDHLFALITALKQLKVPKLYIQFFGDGRDTSPTSGVGFLQQLIDFVNKEQYGEISTIVGRYYAMDRDKRWERIRVCYDALIGGVGEKTTIDKAIDVIKGRYAKDETDEFLKPIILSDEGRTKDGDTLIFFDYRADRMREITECMGMERYKDLNSNIKHPKNMQVIGMTQYKAEFTFPALFPPESHKNVLAEWLSVNGLTQFHCAETEKYAHVTFFFNGGVEKQFANEERCLVVSPKVATYDLEPPMSSAAVADKVIEQLHMKKHPFVMCNFAPPDMVGHTGVYEAAVKAVEATDIAIGRIYEACKKNDYILMVTADHGNAEKMMAPDGSKHTAHTCNLVPFTCSSMKYKFMDKLPDREMALCDVAPTVLKVMGVPLPSEMTGQPLVNEA</sequence>
<protein>
    <recommendedName>
        <fullName evidence="8">2,3-bisphosphoglycerate-independent phosphoglycerate mutase</fullName>
        <shortName evidence="5">iPGM</shortName>
        <ecNumber evidence="3 4">5.4.2.12</ecNumber>
    </recommendedName>
    <alternativeName>
        <fullName evidence="6">Cofactor-independent phosphoglycerate mutase homolog</fullName>
    </alternativeName>
</protein>
<proteinExistence type="evidence at protein level"/>
<reference evidence="9" key="1">
    <citation type="journal article" date="2004" name="J. Biol. Chem.">
        <title>Cofactor-independent phosphoglycerate mutase has an essential role in Caenorhabditis elegans and is conserved in parasitic nematodes.</title>
        <authorList>
            <person name="Zhang Y."/>
            <person name="Foster J.M."/>
            <person name="Kumar S."/>
            <person name="Fougere M."/>
            <person name="Carlow C.K."/>
        </authorList>
    </citation>
    <scope>NUCLEOTIDE SEQUENCE [MRNA]</scope>
    <scope>FUNCTION</scope>
    <scope>CATALYTIC ACTIVITY</scope>
    <scope>ACTIVITY REGULATION</scope>
    <scope>PATHWAY</scope>
</reference>
<reference evidence="7" key="2">
    <citation type="journal article" date="2007" name="Mol. Biochem. Parasitol.">
        <title>Molecular and biochemical characterization of nematode cofactor independent phosphoglycerate mutases.</title>
        <authorList>
            <person name="Raverdy S."/>
            <person name="Zhang Y."/>
            <person name="Foster J."/>
            <person name="Carlow C.K."/>
        </authorList>
    </citation>
    <scope>CATALYTIC ACTIVITY</scope>
    <scope>COFACTOR</scope>
    <scope>BIOPHYSICOCHEMICAL PROPERTIES</scope>
</reference>
<dbReference type="EC" id="5.4.2.12" evidence="3 4"/>
<dbReference type="EMBL" id="AY330617">
    <property type="protein sequence ID" value="AAQ97626.1"/>
    <property type="molecule type" value="mRNA"/>
</dbReference>
<dbReference type="SMR" id="Q4VWF8"/>
<dbReference type="FunCoup" id="Q4VWF8">
    <property type="interactions" value="146"/>
</dbReference>
<dbReference type="STRING" id="6279.Q4VWF8"/>
<dbReference type="EnsemblMetazoa" id="Bm13317.1">
    <property type="protein sequence ID" value="Bm13317.1"/>
    <property type="gene ID" value="WBGene00233578"/>
</dbReference>
<dbReference type="InParanoid" id="Q4VWF8"/>
<dbReference type="OrthoDB" id="1886626at2759"/>
<dbReference type="BRENDA" id="5.4.2.12">
    <property type="organism ID" value="997"/>
</dbReference>
<dbReference type="SABIO-RK" id="Q4VWF8"/>
<dbReference type="UniPathway" id="UPA00109">
    <property type="reaction ID" value="UER00186"/>
</dbReference>
<dbReference type="Proteomes" id="UP000006672">
    <property type="component" value="Unassembled WGS sequence"/>
</dbReference>
<dbReference type="GO" id="GO:0005737">
    <property type="term" value="C:cytoplasm"/>
    <property type="evidence" value="ECO:0007669"/>
    <property type="project" value="InterPro"/>
</dbReference>
<dbReference type="GO" id="GO:0030145">
    <property type="term" value="F:manganese ion binding"/>
    <property type="evidence" value="ECO:0007669"/>
    <property type="project" value="InterPro"/>
</dbReference>
<dbReference type="GO" id="GO:0004619">
    <property type="term" value="F:phosphoglycerate mutase activity"/>
    <property type="evidence" value="ECO:0000314"/>
    <property type="project" value="WormBase"/>
</dbReference>
<dbReference type="GO" id="GO:0006007">
    <property type="term" value="P:glucose catabolic process"/>
    <property type="evidence" value="ECO:0007669"/>
    <property type="project" value="InterPro"/>
</dbReference>
<dbReference type="GO" id="GO:0006096">
    <property type="term" value="P:glycolytic process"/>
    <property type="evidence" value="ECO:0007669"/>
    <property type="project" value="UniProtKB-UniPathway"/>
</dbReference>
<dbReference type="CDD" id="cd16010">
    <property type="entry name" value="iPGM"/>
    <property type="match status" value="1"/>
</dbReference>
<dbReference type="FunFam" id="3.40.1450.10:FF:000001">
    <property type="entry name" value="2,3-bisphosphoglycerate-independent phosphoglycerate mutase"/>
    <property type="match status" value="1"/>
</dbReference>
<dbReference type="Gene3D" id="3.40.720.10">
    <property type="entry name" value="Alkaline Phosphatase, subunit A"/>
    <property type="match status" value="1"/>
</dbReference>
<dbReference type="Gene3D" id="3.40.1450.10">
    <property type="entry name" value="BPG-independent phosphoglycerate mutase, domain B"/>
    <property type="match status" value="1"/>
</dbReference>
<dbReference type="HAMAP" id="MF_01038">
    <property type="entry name" value="GpmI"/>
    <property type="match status" value="1"/>
</dbReference>
<dbReference type="InterPro" id="IPR017850">
    <property type="entry name" value="Alkaline_phosphatase_core_sf"/>
</dbReference>
<dbReference type="InterPro" id="IPR011258">
    <property type="entry name" value="BPG-indep_PGM_N"/>
</dbReference>
<dbReference type="InterPro" id="IPR006124">
    <property type="entry name" value="Metalloenzyme"/>
</dbReference>
<dbReference type="InterPro" id="IPR036646">
    <property type="entry name" value="PGAM_B_sf"/>
</dbReference>
<dbReference type="InterPro" id="IPR005995">
    <property type="entry name" value="Pgm_bpd_ind"/>
</dbReference>
<dbReference type="NCBIfam" id="TIGR01307">
    <property type="entry name" value="pgm_bpd_ind"/>
    <property type="match status" value="1"/>
</dbReference>
<dbReference type="PANTHER" id="PTHR31637">
    <property type="entry name" value="2,3-BISPHOSPHOGLYCERATE-INDEPENDENT PHOSPHOGLYCERATE MUTASE"/>
    <property type="match status" value="1"/>
</dbReference>
<dbReference type="PANTHER" id="PTHR31637:SF0">
    <property type="entry name" value="2,3-BISPHOSPHOGLYCERATE-INDEPENDENT PHOSPHOGLYCERATE MUTASE"/>
    <property type="match status" value="1"/>
</dbReference>
<dbReference type="Pfam" id="PF06415">
    <property type="entry name" value="iPGM_N"/>
    <property type="match status" value="1"/>
</dbReference>
<dbReference type="Pfam" id="PF01676">
    <property type="entry name" value="Metalloenzyme"/>
    <property type="match status" value="1"/>
</dbReference>
<dbReference type="PIRSF" id="PIRSF001492">
    <property type="entry name" value="IPGAM"/>
    <property type="match status" value="1"/>
</dbReference>
<dbReference type="SUPFAM" id="SSF64158">
    <property type="entry name" value="2,3-Bisphosphoglycerate-independent phosphoglycerate mutase, substrate-binding domain"/>
    <property type="match status" value="1"/>
</dbReference>
<dbReference type="SUPFAM" id="SSF53649">
    <property type="entry name" value="Alkaline phosphatase-like"/>
    <property type="match status" value="1"/>
</dbReference>
<accession>Q4VWF8</accession>
<feature type="chain" id="PRO_0000431789" description="2,3-bisphosphoglycerate-independent phosphoglycerate mutase" evidence="7">
    <location>
        <begin position="1"/>
        <end position="515"/>
    </location>
</feature>
<feature type="active site" evidence="2">
    <location>
        <position position="63"/>
    </location>
</feature>
<feature type="binding site" evidence="2">
    <location>
        <position position="14"/>
    </location>
    <ligand>
        <name>Mn(2+)</name>
        <dbReference type="ChEBI" id="CHEBI:29035"/>
        <label>2</label>
    </ligand>
</feature>
<feature type="binding site" evidence="2">
    <location>
        <position position="63"/>
    </location>
    <ligand>
        <name>Mn(2+)</name>
        <dbReference type="ChEBI" id="CHEBI:29035"/>
        <label>2</label>
    </ligand>
</feature>
<feature type="binding site" evidence="2">
    <location>
        <position position="124"/>
    </location>
    <ligand>
        <name>substrate</name>
    </ligand>
</feature>
<feature type="binding site" evidence="2">
    <location>
        <begin position="154"/>
        <end position="155"/>
    </location>
    <ligand>
        <name>substrate</name>
    </ligand>
</feature>
<feature type="binding site" evidence="2">
    <location>
        <position position="186"/>
    </location>
    <ligand>
        <name>substrate</name>
    </ligand>
</feature>
<feature type="binding site" evidence="2">
    <location>
        <position position="192"/>
    </location>
    <ligand>
        <name>substrate</name>
    </ligand>
</feature>
<feature type="binding site" evidence="2">
    <location>
        <begin position="259"/>
        <end position="262"/>
    </location>
    <ligand>
        <name>substrate</name>
    </ligand>
</feature>
<feature type="binding site" evidence="2">
    <location>
        <position position="334"/>
    </location>
    <ligand>
        <name>substrate</name>
    </ligand>
</feature>
<feature type="binding site" evidence="2">
    <location>
        <position position="401"/>
    </location>
    <ligand>
        <name>Mn(2+)</name>
        <dbReference type="ChEBI" id="CHEBI:29035"/>
        <label>1</label>
    </ligand>
</feature>
<feature type="binding site" evidence="2">
    <location>
        <position position="405"/>
    </location>
    <ligand>
        <name>Mn(2+)</name>
        <dbReference type="ChEBI" id="CHEBI:29035"/>
        <label>1</label>
    </ligand>
</feature>
<feature type="binding site" evidence="2">
    <location>
        <position position="442"/>
    </location>
    <ligand>
        <name>Mn(2+)</name>
        <dbReference type="ChEBI" id="CHEBI:29035"/>
        <label>2</label>
    </ligand>
</feature>
<feature type="binding site" evidence="2">
    <location>
        <position position="443"/>
    </location>
    <ligand>
        <name>Mn(2+)</name>
        <dbReference type="ChEBI" id="CHEBI:29035"/>
        <label>2</label>
    </ligand>
</feature>
<feature type="binding site" evidence="2">
    <location>
        <position position="460"/>
    </location>
    <ligand>
        <name>Mn(2+)</name>
        <dbReference type="ChEBI" id="CHEBI:29035"/>
        <label>1</label>
    </ligand>
</feature>